<keyword id="KW-0524">Neurogenesis</keyword>
<keyword id="KW-0539">Nucleus</keyword>
<keyword id="KW-1267">Proteomics identification</keyword>
<keyword id="KW-1185">Reference proteome</keyword>
<keyword id="KW-0678">Repressor</keyword>
<keyword id="KW-0804">Transcription</keyword>
<keyword id="KW-0805">Transcription regulation</keyword>
<evidence type="ECO:0000250" key="1">
    <source>
        <dbReference type="UniProtKB" id="Q8C6A8"/>
    </source>
</evidence>
<evidence type="ECO:0000255" key="2">
    <source>
        <dbReference type="PROSITE-ProRule" id="PRU00981"/>
    </source>
</evidence>
<evidence type="ECO:0000256" key="3">
    <source>
        <dbReference type="SAM" id="MobiDB-lite"/>
    </source>
</evidence>
<evidence type="ECO:0000269" key="4">
    <source>
    </source>
</evidence>
<evidence type="ECO:0000305" key="5"/>
<sequence>MERGMHLGAAAAGEDDLFLHKSLSASTSKRLEAAFRSTPPGMDLSLAPPPRERPASSSSSPLGCFEPADPEGAGLLLPPPGGGGGGSAGSGGGGGGGVGVPGLLVGSAGVGGDPSLSSLPAGAALCLKYGESASRGSVAESSGGEQSPDDDSDGRCELVLRAGVADPRASPGAGGGGAKAAEGCSNAHLHGGASVPPGGLGGGGGGGSSSGSSGGGGGSGSGSGGSSSSSSSSSKKSKEQKALRLNINARERRRMHDLNDALDELRAVIPYAHSPSVRKLSKIATLLLAKNYILMQAQALEEMRRLVAYLNQGQAISAASLPSSAAAAAAAAALHPALGAYEQAAGYPFSAGLPPAASCPEKCALFNSVSSSLCKQCTEKP</sequence>
<dbReference type="EMBL" id="AF504925">
    <property type="protein sequence ID" value="AAM28881.1"/>
    <property type="molecule type" value="Genomic_DNA"/>
</dbReference>
<dbReference type="EMBL" id="BK000273">
    <property type="protein sequence ID" value="DAA01053.1"/>
    <property type="molecule type" value="mRNA"/>
</dbReference>
<dbReference type="CCDS" id="CCDS6179.1"/>
<dbReference type="RefSeq" id="NP_689627.1">
    <property type="nucleotide sequence ID" value="NM_152414.5"/>
</dbReference>
<dbReference type="SMR" id="Q8NFJ8"/>
<dbReference type="BioGRID" id="118136">
    <property type="interactions" value="2"/>
</dbReference>
<dbReference type="FunCoup" id="Q8NFJ8">
    <property type="interactions" value="716"/>
</dbReference>
<dbReference type="STRING" id="9606.ENSP00000318799"/>
<dbReference type="iPTMnet" id="Q8NFJ8"/>
<dbReference type="PhosphoSitePlus" id="Q8NFJ8"/>
<dbReference type="BioMuta" id="BHLHE22"/>
<dbReference type="DMDM" id="74751284"/>
<dbReference type="jPOST" id="Q8NFJ8"/>
<dbReference type="MassIVE" id="Q8NFJ8"/>
<dbReference type="PaxDb" id="9606-ENSP00000318799"/>
<dbReference type="PeptideAtlas" id="Q8NFJ8"/>
<dbReference type="ProteomicsDB" id="73318"/>
<dbReference type="Antibodypedia" id="11910">
    <property type="antibodies" value="156 antibodies from 26 providers"/>
</dbReference>
<dbReference type="DNASU" id="27319"/>
<dbReference type="Ensembl" id="ENST00000321870.3">
    <property type="protein sequence ID" value="ENSP00000318799.1"/>
    <property type="gene ID" value="ENSG00000180828.3"/>
</dbReference>
<dbReference type="GeneID" id="27319"/>
<dbReference type="KEGG" id="hsa:27319"/>
<dbReference type="MANE-Select" id="ENST00000321870.3">
    <property type="protein sequence ID" value="ENSP00000318799.1"/>
    <property type="RefSeq nucleotide sequence ID" value="NM_152414.5"/>
    <property type="RefSeq protein sequence ID" value="NP_689627.1"/>
</dbReference>
<dbReference type="UCSC" id="uc003xvi.4">
    <property type="organism name" value="human"/>
</dbReference>
<dbReference type="AGR" id="HGNC:11963"/>
<dbReference type="CTD" id="27319"/>
<dbReference type="DisGeNET" id="27319"/>
<dbReference type="GeneCards" id="BHLHE22"/>
<dbReference type="HGNC" id="HGNC:11963">
    <property type="gene designation" value="BHLHE22"/>
</dbReference>
<dbReference type="HPA" id="ENSG00000180828">
    <property type="expression patterns" value="Tissue enriched (brain)"/>
</dbReference>
<dbReference type="MIM" id="613483">
    <property type="type" value="gene"/>
</dbReference>
<dbReference type="neXtProt" id="NX_Q8NFJ8"/>
<dbReference type="OpenTargets" id="ENSG00000180828"/>
<dbReference type="PharmGKB" id="PA36650"/>
<dbReference type="VEuPathDB" id="HostDB:ENSG00000180828"/>
<dbReference type="eggNOG" id="KOG3898">
    <property type="taxonomic scope" value="Eukaryota"/>
</dbReference>
<dbReference type="GeneTree" id="ENSGT00940000162962"/>
<dbReference type="HOGENOM" id="CLU_070971_0_0_1"/>
<dbReference type="InParanoid" id="Q8NFJ8"/>
<dbReference type="OMA" id="AGDIFHK"/>
<dbReference type="OrthoDB" id="10011855at2759"/>
<dbReference type="PAN-GO" id="Q8NFJ8">
    <property type="GO annotations" value="5 GO annotations based on evolutionary models"/>
</dbReference>
<dbReference type="PhylomeDB" id="Q8NFJ8"/>
<dbReference type="TreeFam" id="TF322733"/>
<dbReference type="PathwayCommons" id="Q8NFJ8"/>
<dbReference type="Reactome" id="R-HSA-9762293">
    <property type="pathway name" value="Regulation of CDH11 gene transcription"/>
</dbReference>
<dbReference type="SignaLink" id="Q8NFJ8"/>
<dbReference type="BioGRID-ORCS" id="27319">
    <property type="hits" value="19 hits in 1158 CRISPR screens"/>
</dbReference>
<dbReference type="GenomeRNAi" id="27319"/>
<dbReference type="Pharos" id="Q8NFJ8">
    <property type="development level" value="Tbio"/>
</dbReference>
<dbReference type="PRO" id="PR:Q8NFJ8"/>
<dbReference type="Proteomes" id="UP000005640">
    <property type="component" value="Chromosome 8"/>
</dbReference>
<dbReference type="RNAct" id="Q8NFJ8">
    <property type="molecule type" value="protein"/>
</dbReference>
<dbReference type="Bgee" id="ENSG00000180828">
    <property type="expression patterns" value="Expressed in secondary oocyte and 145 other cell types or tissues"/>
</dbReference>
<dbReference type="GO" id="GO:0000785">
    <property type="term" value="C:chromatin"/>
    <property type="evidence" value="ECO:0000247"/>
    <property type="project" value="NTNU_SB"/>
</dbReference>
<dbReference type="GO" id="GO:0005634">
    <property type="term" value="C:nucleus"/>
    <property type="evidence" value="ECO:0000318"/>
    <property type="project" value="GO_Central"/>
</dbReference>
<dbReference type="GO" id="GO:0000981">
    <property type="term" value="F:DNA-binding transcription factor activity, RNA polymerase II-specific"/>
    <property type="evidence" value="ECO:0000247"/>
    <property type="project" value="NTNU_SB"/>
</dbReference>
<dbReference type="GO" id="GO:0070888">
    <property type="term" value="F:E-box binding"/>
    <property type="evidence" value="ECO:0000318"/>
    <property type="project" value="GO_Central"/>
</dbReference>
<dbReference type="GO" id="GO:0046983">
    <property type="term" value="F:protein dimerization activity"/>
    <property type="evidence" value="ECO:0007669"/>
    <property type="project" value="InterPro"/>
</dbReference>
<dbReference type="GO" id="GO:1990837">
    <property type="term" value="F:sequence-specific double-stranded DNA binding"/>
    <property type="evidence" value="ECO:0000314"/>
    <property type="project" value="ARUK-UCL"/>
</dbReference>
<dbReference type="GO" id="GO:0061564">
    <property type="term" value="P:axon development"/>
    <property type="evidence" value="ECO:0000318"/>
    <property type="project" value="GO_Central"/>
</dbReference>
<dbReference type="GO" id="GO:0045944">
    <property type="term" value="P:positive regulation of transcription by RNA polymerase II"/>
    <property type="evidence" value="ECO:0000318"/>
    <property type="project" value="GO_Central"/>
</dbReference>
<dbReference type="GO" id="GO:0007423">
    <property type="term" value="P:sensory organ development"/>
    <property type="evidence" value="ECO:0000318"/>
    <property type="project" value="GO_Central"/>
</dbReference>
<dbReference type="CDD" id="cd18954">
    <property type="entry name" value="bHLH_TS_bHLHe22_bHLHb5"/>
    <property type="match status" value="1"/>
</dbReference>
<dbReference type="FunFam" id="4.10.280.10:FF:000026">
    <property type="entry name" value="Basic helix-loop-helix family, member e23"/>
    <property type="match status" value="1"/>
</dbReference>
<dbReference type="Gene3D" id="4.10.280.10">
    <property type="entry name" value="Helix-loop-helix DNA-binding domain"/>
    <property type="match status" value="1"/>
</dbReference>
<dbReference type="InterPro" id="IPR011598">
    <property type="entry name" value="bHLH_dom"/>
</dbReference>
<dbReference type="InterPro" id="IPR050359">
    <property type="entry name" value="bHLH_transcription_factors"/>
</dbReference>
<dbReference type="InterPro" id="IPR036638">
    <property type="entry name" value="HLH_DNA-bd_sf"/>
</dbReference>
<dbReference type="PANTHER" id="PTHR19290">
    <property type="entry name" value="BASIC HELIX-LOOP-HELIX PROTEIN NEUROGENIN-RELATED"/>
    <property type="match status" value="1"/>
</dbReference>
<dbReference type="PANTHER" id="PTHR19290:SF52">
    <property type="entry name" value="CLASS E BASIC HELIX-LOOP-HELIX PROTEIN 22"/>
    <property type="match status" value="1"/>
</dbReference>
<dbReference type="Pfam" id="PF00010">
    <property type="entry name" value="HLH"/>
    <property type="match status" value="1"/>
</dbReference>
<dbReference type="SMART" id="SM00353">
    <property type="entry name" value="HLH"/>
    <property type="match status" value="1"/>
</dbReference>
<dbReference type="SUPFAM" id="SSF47459">
    <property type="entry name" value="HLH, helix-loop-helix DNA-binding domain"/>
    <property type="match status" value="1"/>
</dbReference>
<dbReference type="PROSITE" id="PS50888">
    <property type="entry name" value="BHLH"/>
    <property type="match status" value="1"/>
</dbReference>
<feature type="chain" id="PRO_0000274285" description="Class E basic helix-loop-helix protein 22">
    <location>
        <begin position="1"/>
        <end position="381"/>
    </location>
</feature>
<feature type="domain" description="bHLH" evidence="2">
    <location>
        <begin position="242"/>
        <end position="296"/>
    </location>
</feature>
<feature type="region of interest" description="Disordered" evidence="3">
    <location>
        <begin position="30"/>
        <end position="94"/>
    </location>
</feature>
<feature type="region of interest" description="Disordered" evidence="3">
    <location>
        <begin position="135"/>
        <end position="154"/>
    </location>
</feature>
<feature type="region of interest" description="Disordered" evidence="3">
    <location>
        <begin position="188"/>
        <end position="242"/>
    </location>
</feature>
<feature type="compositionally biased region" description="Gly residues" evidence="3">
    <location>
        <begin position="82"/>
        <end position="94"/>
    </location>
</feature>
<feature type="compositionally biased region" description="Gly residues" evidence="3">
    <location>
        <begin position="198"/>
        <end position="225"/>
    </location>
</feature>
<feature type="sequence variant" id="VAR_061255" description="In dbSNP:rs7016250.">
    <original>S</original>
    <variation>A</variation>
    <location>
        <position position="28"/>
    </location>
</feature>
<proteinExistence type="evidence at protein level"/>
<name>BHE22_HUMAN</name>
<organism>
    <name type="scientific">Homo sapiens</name>
    <name type="common">Human</name>
    <dbReference type="NCBI Taxonomy" id="9606"/>
    <lineage>
        <taxon>Eukaryota</taxon>
        <taxon>Metazoa</taxon>
        <taxon>Chordata</taxon>
        <taxon>Craniata</taxon>
        <taxon>Vertebrata</taxon>
        <taxon>Euteleostomi</taxon>
        <taxon>Mammalia</taxon>
        <taxon>Eutheria</taxon>
        <taxon>Euarchontoglires</taxon>
        <taxon>Primates</taxon>
        <taxon>Haplorrhini</taxon>
        <taxon>Catarrhini</taxon>
        <taxon>Hominidae</taxon>
        <taxon>Homo</taxon>
    </lineage>
</organism>
<protein>
    <recommendedName>
        <fullName>Class E basic helix-loop-helix protein 22</fullName>
        <shortName>bHLHe22</shortName>
    </recommendedName>
    <alternativeName>
        <fullName>Class B basic helix-loop-helix protein 5</fullName>
        <shortName>bHLHb5</shortName>
    </alternativeName>
    <alternativeName>
        <fullName>Trinucleotide repeat-containing gene 20 protein</fullName>
    </alternativeName>
</protein>
<comment type="function">
    <text evidence="1">Inhibits DNA binding of TCF3/E47 homodimers and TCF3 (E47)/NEUROD1 heterodimers and acts as a strong repressor of Neurod1 and Myod-responsive genes, probably by heterodimerization with class a basic helix-loop-helix factors. Despite the presence of an intact basic domain, does not bind to DNA (By similarity). In the brain, may function as an area-specific transcription factor that regulates the postmitotic acquisition of area identities and elucidate the genetic hierarchy between progenitors and postmitotic neurons driving neocortical arealization. May be required for the survival of a specific population of inhibitory neurons in the superficial laminae of the spinal cord dorsal horn that may regulate pruritis. Seems to play a crucial role in the retinogenesis, in the specification of amacrine and bipolar subtypes. Forms with PRDM8 a transcriptional repressor complex controlling genes involved in neural development and neuronal differentiation.</text>
</comment>
<comment type="subunit">
    <text evidence="1">Interacts with PRDM8.</text>
</comment>
<comment type="subcellular location">
    <subcellularLocation>
        <location evidence="5">Nucleus</location>
    </subcellularLocation>
</comment>
<comment type="tissue specificity">
    <text evidence="4">Brain-specific, with the highest expression in the cerebellum.</text>
</comment>
<accession>Q8NFJ8</accession>
<gene>
    <name type="primary">BHLHE22</name>
    <name type="synonym">BHLHB5</name>
    <name type="synonym">TNRC20</name>
</gene>
<reference key="1">
    <citation type="journal article" date="2002" name="Genomics">
        <title>Functional and structural characterization of the human gene BHLHB5, encoding a basic helix-loop-helix transcription factor.</title>
        <authorList>
            <person name="Xu Z.-P."/>
            <person name="Dutra A."/>
            <person name="Stellrecht C.M."/>
            <person name="Wu C."/>
            <person name="Piatigorsky J."/>
            <person name="Saunders G.F."/>
        </authorList>
    </citation>
    <scope>NUCLEOTIDE SEQUENCE [GENOMIC DNA]</scope>
    <scope>TISSUE SPECIFICITY</scope>
</reference>
<reference key="2">
    <citation type="journal article" date="2002" name="Mech. Dev.">
        <title>Exhaustive identification of human class II basic helix-loop-helix proteins by virtual library screening.</title>
        <authorList>
            <person name="McLellan A.S."/>
            <person name="Langlands K."/>
            <person name="Kealey T."/>
        </authorList>
    </citation>
    <scope>IDENTIFICATION</scope>
</reference>